<evidence type="ECO:0000255" key="1">
    <source>
        <dbReference type="HAMAP-Rule" id="MF_00519"/>
    </source>
</evidence>
<accession>B2U268</accession>
<reference key="1">
    <citation type="submission" date="2008-05" db="EMBL/GenBank/DDBJ databases">
        <title>Complete sequence of Shigella boydii serotype 18 strain BS512.</title>
        <authorList>
            <person name="Rasko D.A."/>
            <person name="Rosovitz M."/>
            <person name="Maurelli A.T."/>
            <person name="Myers G."/>
            <person name="Seshadri R."/>
            <person name="Cer R."/>
            <person name="Jiang L."/>
            <person name="Ravel J."/>
            <person name="Sebastian Y."/>
        </authorList>
    </citation>
    <scope>NUCLEOTIDE SEQUENCE [LARGE SCALE GENOMIC DNA]</scope>
    <source>
        <strain>CDC 3083-94 / BS512</strain>
    </source>
</reference>
<dbReference type="EC" id="5.3.1.4" evidence="1"/>
<dbReference type="EMBL" id="CP001063">
    <property type="protein sequence ID" value="ACD10336.1"/>
    <property type="molecule type" value="Genomic_DNA"/>
</dbReference>
<dbReference type="RefSeq" id="WP_000151730.1">
    <property type="nucleotide sequence ID" value="NC_010658.1"/>
</dbReference>
<dbReference type="SMR" id="B2U268"/>
<dbReference type="STRING" id="344609.SbBS512_E0054"/>
<dbReference type="KEGG" id="sbc:SbBS512_E0054"/>
<dbReference type="HOGENOM" id="CLU_045663_0_0_6"/>
<dbReference type="UniPathway" id="UPA00145">
    <property type="reaction ID" value="UER00565"/>
</dbReference>
<dbReference type="Proteomes" id="UP000001030">
    <property type="component" value="Chromosome"/>
</dbReference>
<dbReference type="GO" id="GO:0005829">
    <property type="term" value="C:cytosol"/>
    <property type="evidence" value="ECO:0007669"/>
    <property type="project" value="TreeGrafter"/>
</dbReference>
<dbReference type="GO" id="GO:0008733">
    <property type="term" value="F:L-arabinose isomerase activity"/>
    <property type="evidence" value="ECO:0007669"/>
    <property type="project" value="UniProtKB-UniRule"/>
</dbReference>
<dbReference type="GO" id="GO:0030145">
    <property type="term" value="F:manganese ion binding"/>
    <property type="evidence" value="ECO:0007669"/>
    <property type="project" value="UniProtKB-UniRule"/>
</dbReference>
<dbReference type="GO" id="GO:0019569">
    <property type="term" value="P:L-arabinose catabolic process to xylulose 5-phosphate"/>
    <property type="evidence" value="ECO:0007669"/>
    <property type="project" value="UniProtKB-UniRule"/>
</dbReference>
<dbReference type="CDD" id="cd03557">
    <property type="entry name" value="L-arabinose_isomerase"/>
    <property type="match status" value="1"/>
</dbReference>
<dbReference type="FunFam" id="3.40.50.10940:FF:000001">
    <property type="entry name" value="L-arabinose isomerase"/>
    <property type="match status" value="1"/>
</dbReference>
<dbReference type="Gene3D" id="3.40.50.10940">
    <property type="match status" value="1"/>
</dbReference>
<dbReference type="HAMAP" id="MF_00519">
    <property type="entry name" value="Arabinose_Isome"/>
    <property type="match status" value="1"/>
</dbReference>
<dbReference type="InterPro" id="IPR024664">
    <property type="entry name" value="Ara_Isoase_C"/>
</dbReference>
<dbReference type="InterPro" id="IPR055390">
    <property type="entry name" value="AraA_central"/>
</dbReference>
<dbReference type="InterPro" id="IPR055389">
    <property type="entry name" value="AraA_N"/>
</dbReference>
<dbReference type="InterPro" id="IPR038583">
    <property type="entry name" value="AraA_N_sf"/>
</dbReference>
<dbReference type="InterPro" id="IPR004216">
    <property type="entry name" value="Fuc/Ara_isomerase_C"/>
</dbReference>
<dbReference type="InterPro" id="IPR009015">
    <property type="entry name" value="Fucose_isomerase_N/cen_sf"/>
</dbReference>
<dbReference type="InterPro" id="IPR003762">
    <property type="entry name" value="Lara_isomerase"/>
</dbReference>
<dbReference type="NCBIfam" id="NF002795">
    <property type="entry name" value="PRK02929.1"/>
    <property type="match status" value="1"/>
</dbReference>
<dbReference type="PANTHER" id="PTHR38464">
    <property type="entry name" value="L-ARABINOSE ISOMERASE"/>
    <property type="match status" value="1"/>
</dbReference>
<dbReference type="PANTHER" id="PTHR38464:SF1">
    <property type="entry name" value="L-ARABINOSE ISOMERASE"/>
    <property type="match status" value="1"/>
</dbReference>
<dbReference type="Pfam" id="PF24856">
    <property type="entry name" value="AraA_central"/>
    <property type="match status" value="1"/>
</dbReference>
<dbReference type="Pfam" id="PF02610">
    <property type="entry name" value="AraA_N"/>
    <property type="match status" value="1"/>
</dbReference>
<dbReference type="Pfam" id="PF11762">
    <property type="entry name" value="Arabinose_Iso_C"/>
    <property type="match status" value="1"/>
</dbReference>
<dbReference type="PIRSF" id="PIRSF001478">
    <property type="entry name" value="L-ara_isomerase"/>
    <property type="match status" value="1"/>
</dbReference>
<dbReference type="SUPFAM" id="SSF50443">
    <property type="entry name" value="FucI/AraA C-terminal domain-like"/>
    <property type="match status" value="1"/>
</dbReference>
<dbReference type="SUPFAM" id="SSF53743">
    <property type="entry name" value="FucI/AraA N-terminal and middle domains"/>
    <property type="match status" value="1"/>
</dbReference>
<name>ARAA_SHIB3</name>
<gene>
    <name evidence="1" type="primary">araA</name>
    <name type="ordered locus">SbBS512_E0054</name>
</gene>
<comment type="function">
    <text evidence="1">Catalyzes the conversion of L-arabinose to L-ribulose.</text>
</comment>
<comment type="catalytic activity">
    <reaction evidence="1">
        <text>beta-L-arabinopyranose = L-ribulose</text>
        <dbReference type="Rhea" id="RHEA:14821"/>
        <dbReference type="ChEBI" id="CHEBI:16880"/>
        <dbReference type="ChEBI" id="CHEBI:40886"/>
        <dbReference type="EC" id="5.3.1.4"/>
    </reaction>
</comment>
<comment type="cofactor">
    <cofactor evidence="1">
        <name>Mn(2+)</name>
        <dbReference type="ChEBI" id="CHEBI:29035"/>
    </cofactor>
    <text evidence="1">Binds 1 Mn(2+) ion per subunit.</text>
</comment>
<comment type="pathway">
    <text evidence="1">Carbohydrate degradation; L-arabinose degradation via L-ribulose; D-xylulose 5-phosphate from L-arabinose (bacterial route): step 1/3.</text>
</comment>
<comment type="subunit">
    <text evidence="1">Homohexamer.</text>
</comment>
<comment type="similarity">
    <text evidence="1">Belongs to the arabinose isomerase family.</text>
</comment>
<keyword id="KW-0054">Arabinose catabolism</keyword>
<keyword id="KW-0119">Carbohydrate metabolism</keyword>
<keyword id="KW-0413">Isomerase</keyword>
<keyword id="KW-0464">Manganese</keyword>
<keyword id="KW-0479">Metal-binding</keyword>
<keyword id="KW-1185">Reference proteome</keyword>
<feature type="chain" id="PRO_1000127620" description="L-arabinose isomerase">
    <location>
        <begin position="1"/>
        <end position="500"/>
    </location>
</feature>
<feature type="binding site" evidence="1">
    <location>
        <position position="306"/>
    </location>
    <ligand>
        <name>Mn(2+)</name>
        <dbReference type="ChEBI" id="CHEBI:29035"/>
    </ligand>
</feature>
<feature type="binding site" evidence="1">
    <location>
        <position position="333"/>
    </location>
    <ligand>
        <name>Mn(2+)</name>
        <dbReference type="ChEBI" id="CHEBI:29035"/>
    </ligand>
</feature>
<feature type="binding site" evidence="1">
    <location>
        <position position="350"/>
    </location>
    <ligand>
        <name>Mn(2+)</name>
        <dbReference type="ChEBI" id="CHEBI:29035"/>
    </ligand>
</feature>
<feature type="binding site" evidence="1">
    <location>
        <position position="450"/>
    </location>
    <ligand>
        <name>Mn(2+)</name>
        <dbReference type="ChEBI" id="CHEBI:29035"/>
    </ligand>
</feature>
<organism>
    <name type="scientific">Shigella boydii serotype 18 (strain CDC 3083-94 / BS512)</name>
    <dbReference type="NCBI Taxonomy" id="344609"/>
    <lineage>
        <taxon>Bacteria</taxon>
        <taxon>Pseudomonadati</taxon>
        <taxon>Pseudomonadota</taxon>
        <taxon>Gammaproteobacteria</taxon>
        <taxon>Enterobacterales</taxon>
        <taxon>Enterobacteriaceae</taxon>
        <taxon>Shigella</taxon>
    </lineage>
</organism>
<proteinExistence type="inferred from homology"/>
<sequence length="500" mass="56119">MTIFDNYEVWFVIGSQHLYGPETLRQVTQHAEHVVNALNTEAKLPCKLVLKPLGTTPDEITAICRDANYDDRCAGLVVWLHTFSPAKMWINGLTMLNKPLLQFHTQFNAALPWDSIDMDFMNLNQTAHGGREFGFIGARMRQQHAVVTGHWQDKQAHERIGSWMRQAVSKQDTRHLKVCRFGDNMREVAVTDGDKVAAQIKFGFSVNTWAVGDLVQVVNSISDGDVNALVDEYESCYTMTPATQIHGEKRQNVLEAARIELGMKRFLEQGGFHAFTTTFEDLHGLKQLPGLAVQRLMQQGYGFAGEGDWKTAALLRIMKVMSTGLQGGTSFMEDYTYHFEKGNDLVLGSHMLEVCPSIAVEEKPILDVQHLGIGGKDDPARLIFNTQTGPAIVASLIDLGDRYRLLVNCIDTVKTPHSLLKLPVANALWKAQPDLPTASEAWILAGGAHHTVFSHALNLNDMRQFAEMHDIEITVIDNDTRLPAFKDALRWNEVYYGFRR</sequence>
<protein>
    <recommendedName>
        <fullName evidence="1">L-arabinose isomerase</fullName>
        <ecNumber evidence="1">5.3.1.4</ecNumber>
    </recommendedName>
</protein>